<dbReference type="EMBL" id="FM211187">
    <property type="protein sequence ID" value="CAR69989.1"/>
    <property type="molecule type" value="Genomic_DNA"/>
</dbReference>
<dbReference type="RefSeq" id="WP_000266669.1">
    <property type="nucleotide sequence ID" value="NC_011900.1"/>
</dbReference>
<dbReference type="SMR" id="B8ZQB8"/>
<dbReference type="KEGG" id="sne:SPN23F22600"/>
<dbReference type="HOGENOM" id="CLU_040267_0_1_9"/>
<dbReference type="GO" id="GO:0005737">
    <property type="term" value="C:cytoplasm"/>
    <property type="evidence" value="ECO:0007669"/>
    <property type="project" value="UniProtKB-SubCell"/>
</dbReference>
<dbReference type="GO" id="GO:0005524">
    <property type="term" value="F:ATP binding"/>
    <property type="evidence" value="ECO:0007669"/>
    <property type="project" value="UniProtKB-UniRule"/>
</dbReference>
<dbReference type="GO" id="GO:0003697">
    <property type="term" value="F:single-stranded DNA binding"/>
    <property type="evidence" value="ECO:0007669"/>
    <property type="project" value="UniProtKB-UniRule"/>
</dbReference>
<dbReference type="GO" id="GO:0006260">
    <property type="term" value="P:DNA replication"/>
    <property type="evidence" value="ECO:0007669"/>
    <property type="project" value="UniProtKB-UniRule"/>
</dbReference>
<dbReference type="GO" id="GO:0000731">
    <property type="term" value="P:DNA synthesis involved in DNA repair"/>
    <property type="evidence" value="ECO:0007669"/>
    <property type="project" value="TreeGrafter"/>
</dbReference>
<dbReference type="GO" id="GO:0006302">
    <property type="term" value="P:double-strand break repair"/>
    <property type="evidence" value="ECO:0007669"/>
    <property type="project" value="TreeGrafter"/>
</dbReference>
<dbReference type="GO" id="GO:0009432">
    <property type="term" value="P:SOS response"/>
    <property type="evidence" value="ECO:0007669"/>
    <property type="project" value="UniProtKB-UniRule"/>
</dbReference>
<dbReference type="CDD" id="cd03242">
    <property type="entry name" value="ABC_RecF"/>
    <property type="match status" value="1"/>
</dbReference>
<dbReference type="FunFam" id="1.20.1050.90:FF:000002">
    <property type="entry name" value="DNA replication and repair protein RecF"/>
    <property type="match status" value="1"/>
</dbReference>
<dbReference type="Gene3D" id="3.40.50.300">
    <property type="entry name" value="P-loop containing nucleotide triphosphate hydrolases"/>
    <property type="match status" value="1"/>
</dbReference>
<dbReference type="Gene3D" id="1.20.1050.90">
    <property type="entry name" value="RecF/RecN/SMC, N-terminal domain"/>
    <property type="match status" value="1"/>
</dbReference>
<dbReference type="HAMAP" id="MF_00365">
    <property type="entry name" value="RecF"/>
    <property type="match status" value="1"/>
</dbReference>
<dbReference type="InterPro" id="IPR001238">
    <property type="entry name" value="DNA-binding_RecF"/>
</dbReference>
<dbReference type="InterPro" id="IPR018078">
    <property type="entry name" value="DNA-binding_RecF_CS"/>
</dbReference>
<dbReference type="InterPro" id="IPR027417">
    <property type="entry name" value="P-loop_NTPase"/>
</dbReference>
<dbReference type="InterPro" id="IPR003395">
    <property type="entry name" value="RecF/RecN/SMC_N"/>
</dbReference>
<dbReference type="InterPro" id="IPR042174">
    <property type="entry name" value="RecF_2"/>
</dbReference>
<dbReference type="NCBIfam" id="TIGR00611">
    <property type="entry name" value="recf"/>
    <property type="match status" value="1"/>
</dbReference>
<dbReference type="PANTHER" id="PTHR32182">
    <property type="entry name" value="DNA REPLICATION AND REPAIR PROTEIN RECF"/>
    <property type="match status" value="1"/>
</dbReference>
<dbReference type="PANTHER" id="PTHR32182:SF0">
    <property type="entry name" value="DNA REPLICATION AND REPAIR PROTEIN RECF"/>
    <property type="match status" value="1"/>
</dbReference>
<dbReference type="Pfam" id="PF02463">
    <property type="entry name" value="SMC_N"/>
    <property type="match status" value="1"/>
</dbReference>
<dbReference type="SUPFAM" id="SSF52540">
    <property type="entry name" value="P-loop containing nucleoside triphosphate hydrolases"/>
    <property type="match status" value="1"/>
</dbReference>
<dbReference type="PROSITE" id="PS00617">
    <property type="entry name" value="RECF_1"/>
    <property type="match status" value="1"/>
</dbReference>
<dbReference type="PROSITE" id="PS00618">
    <property type="entry name" value="RECF_2"/>
    <property type="match status" value="1"/>
</dbReference>
<sequence>MWLQHLSLKTFRNYKETKIDFNPKLNVFLGRNAQGKTNMLEAIYFLALTRSHRTRTDKNLIHFDEEQLHLSGLVQKKTGSIPLEIELTQKGRVTKVNHLKQARLSDYVGHMNVVLFAPEDLQLIKGAPSIRRKFIDMELGQIKPIYLSDLTNYNHILKQRNTYLKSDQKIDETFLSVLDDQLVDYGCRVMNHRLDFIKKLESFGRKKHFELSNQIEELSISYQSSVNITDKQNLSESFKIALEKSRSRDLFKKNTGVGPHRDDISFYINGMDASFGSQGQHRSLVLSIKLAEIELMESITTESPILLLDDVMSELDNTRQLKLLETISQSIQTFITTTSLDHLQNLPENLSIFTIQDGKASVNGN</sequence>
<evidence type="ECO:0000255" key="1">
    <source>
        <dbReference type="HAMAP-Rule" id="MF_00365"/>
    </source>
</evidence>
<reference key="1">
    <citation type="journal article" date="2009" name="J. Bacteriol.">
        <title>Role of conjugative elements in the evolution of the multidrug-resistant pandemic clone Streptococcus pneumoniae Spain23F ST81.</title>
        <authorList>
            <person name="Croucher N.J."/>
            <person name="Walker D."/>
            <person name="Romero P."/>
            <person name="Lennard N."/>
            <person name="Paterson G.K."/>
            <person name="Bason N.C."/>
            <person name="Mitchell A.M."/>
            <person name="Quail M.A."/>
            <person name="Andrew P.W."/>
            <person name="Parkhill J."/>
            <person name="Bentley S.D."/>
            <person name="Mitchell T.J."/>
        </authorList>
    </citation>
    <scope>NUCLEOTIDE SEQUENCE [LARGE SCALE GENOMIC DNA]</scope>
    <source>
        <strain>ATCC 700669 / Spain 23F-1</strain>
    </source>
</reference>
<organism>
    <name type="scientific">Streptococcus pneumoniae (strain ATCC 700669 / Spain 23F-1)</name>
    <dbReference type="NCBI Taxonomy" id="561276"/>
    <lineage>
        <taxon>Bacteria</taxon>
        <taxon>Bacillati</taxon>
        <taxon>Bacillota</taxon>
        <taxon>Bacilli</taxon>
        <taxon>Lactobacillales</taxon>
        <taxon>Streptococcaceae</taxon>
        <taxon>Streptococcus</taxon>
    </lineage>
</organism>
<feature type="chain" id="PRO_1000133702" description="DNA replication and repair protein RecF">
    <location>
        <begin position="1"/>
        <end position="365"/>
    </location>
</feature>
<feature type="binding site" evidence="1">
    <location>
        <begin position="30"/>
        <end position="37"/>
    </location>
    <ligand>
        <name>ATP</name>
        <dbReference type="ChEBI" id="CHEBI:30616"/>
    </ligand>
</feature>
<keyword id="KW-0067">ATP-binding</keyword>
<keyword id="KW-0963">Cytoplasm</keyword>
<keyword id="KW-0227">DNA damage</keyword>
<keyword id="KW-0234">DNA repair</keyword>
<keyword id="KW-0235">DNA replication</keyword>
<keyword id="KW-0238">DNA-binding</keyword>
<keyword id="KW-0547">Nucleotide-binding</keyword>
<keyword id="KW-0742">SOS response</keyword>
<protein>
    <recommendedName>
        <fullName evidence="1">DNA replication and repair protein RecF</fullName>
    </recommendedName>
</protein>
<comment type="function">
    <text evidence="1">The RecF protein is involved in DNA metabolism; it is required for DNA replication and normal SOS inducibility. RecF binds preferentially to single-stranded, linear DNA. It also seems to bind ATP.</text>
</comment>
<comment type="subcellular location">
    <subcellularLocation>
        <location evidence="1">Cytoplasm</location>
    </subcellularLocation>
</comment>
<comment type="similarity">
    <text evidence="1">Belongs to the RecF family.</text>
</comment>
<proteinExistence type="inferred from homology"/>
<accession>B8ZQB8</accession>
<name>RECF_STRPJ</name>
<gene>
    <name evidence="1" type="primary">recF</name>
    <name type="ordered locus">SPN23F22600</name>
</gene>